<dbReference type="EMBL" id="AM260525">
    <property type="protein sequence ID" value="CAK02277.1"/>
    <property type="molecule type" value="Genomic_DNA"/>
</dbReference>
<dbReference type="RefSeq" id="WP_005774667.1">
    <property type="nucleotide sequence ID" value="NC_010161.1"/>
</dbReference>
<dbReference type="SMR" id="A9IY12"/>
<dbReference type="GeneID" id="71061939"/>
<dbReference type="KEGG" id="btr:BT_2245"/>
<dbReference type="eggNOG" id="COG0234">
    <property type="taxonomic scope" value="Bacteria"/>
</dbReference>
<dbReference type="HOGENOM" id="CLU_132825_1_0_5"/>
<dbReference type="Proteomes" id="UP000001592">
    <property type="component" value="Chromosome"/>
</dbReference>
<dbReference type="GO" id="GO:0005737">
    <property type="term" value="C:cytoplasm"/>
    <property type="evidence" value="ECO:0007669"/>
    <property type="project" value="UniProtKB-SubCell"/>
</dbReference>
<dbReference type="GO" id="GO:0005524">
    <property type="term" value="F:ATP binding"/>
    <property type="evidence" value="ECO:0007669"/>
    <property type="project" value="InterPro"/>
</dbReference>
<dbReference type="GO" id="GO:0046872">
    <property type="term" value="F:metal ion binding"/>
    <property type="evidence" value="ECO:0007669"/>
    <property type="project" value="TreeGrafter"/>
</dbReference>
<dbReference type="GO" id="GO:0044183">
    <property type="term" value="F:protein folding chaperone"/>
    <property type="evidence" value="ECO:0007669"/>
    <property type="project" value="InterPro"/>
</dbReference>
<dbReference type="GO" id="GO:0051087">
    <property type="term" value="F:protein-folding chaperone binding"/>
    <property type="evidence" value="ECO:0007669"/>
    <property type="project" value="TreeGrafter"/>
</dbReference>
<dbReference type="GO" id="GO:0051082">
    <property type="term" value="F:unfolded protein binding"/>
    <property type="evidence" value="ECO:0007669"/>
    <property type="project" value="TreeGrafter"/>
</dbReference>
<dbReference type="GO" id="GO:0051085">
    <property type="term" value="P:chaperone cofactor-dependent protein refolding"/>
    <property type="evidence" value="ECO:0007669"/>
    <property type="project" value="TreeGrafter"/>
</dbReference>
<dbReference type="CDD" id="cd00320">
    <property type="entry name" value="cpn10"/>
    <property type="match status" value="1"/>
</dbReference>
<dbReference type="FunFam" id="2.30.33.40:FF:000001">
    <property type="entry name" value="10 kDa chaperonin"/>
    <property type="match status" value="1"/>
</dbReference>
<dbReference type="Gene3D" id="2.30.33.40">
    <property type="entry name" value="GroES chaperonin"/>
    <property type="match status" value="1"/>
</dbReference>
<dbReference type="HAMAP" id="MF_00580">
    <property type="entry name" value="CH10"/>
    <property type="match status" value="1"/>
</dbReference>
<dbReference type="InterPro" id="IPR020818">
    <property type="entry name" value="Chaperonin_GroES"/>
</dbReference>
<dbReference type="InterPro" id="IPR037124">
    <property type="entry name" value="Chaperonin_GroES_sf"/>
</dbReference>
<dbReference type="InterPro" id="IPR018369">
    <property type="entry name" value="Chaprnonin_Cpn10_CS"/>
</dbReference>
<dbReference type="InterPro" id="IPR011032">
    <property type="entry name" value="GroES-like_sf"/>
</dbReference>
<dbReference type="NCBIfam" id="NF001527">
    <property type="entry name" value="PRK00364.1-2"/>
    <property type="match status" value="1"/>
</dbReference>
<dbReference type="NCBIfam" id="NF001529">
    <property type="entry name" value="PRK00364.1-5"/>
    <property type="match status" value="1"/>
</dbReference>
<dbReference type="NCBIfam" id="NF001531">
    <property type="entry name" value="PRK00364.2-2"/>
    <property type="match status" value="1"/>
</dbReference>
<dbReference type="NCBIfam" id="NF001533">
    <property type="entry name" value="PRK00364.2-4"/>
    <property type="match status" value="1"/>
</dbReference>
<dbReference type="NCBIfam" id="NF001534">
    <property type="entry name" value="PRK00364.2-5"/>
    <property type="match status" value="1"/>
</dbReference>
<dbReference type="PANTHER" id="PTHR10772">
    <property type="entry name" value="10 KDA HEAT SHOCK PROTEIN"/>
    <property type="match status" value="1"/>
</dbReference>
<dbReference type="PANTHER" id="PTHR10772:SF58">
    <property type="entry name" value="CO-CHAPERONIN GROES"/>
    <property type="match status" value="1"/>
</dbReference>
<dbReference type="Pfam" id="PF00166">
    <property type="entry name" value="Cpn10"/>
    <property type="match status" value="1"/>
</dbReference>
<dbReference type="PRINTS" id="PR00297">
    <property type="entry name" value="CHAPERONIN10"/>
</dbReference>
<dbReference type="SMART" id="SM00883">
    <property type="entry name" value="Cpn10"/>
    <property type="match status" value="1"/>
</dbReference>
<dbReference type="SUPFAM" id="SSF50129">
    <property type="entry name" value="GroES-like"/>
    <property type="match status" value="1"/>
</dbReference>
<dbReference type="PROSITE" id="PS00681">
    <property type="entry name" value="CHAPERONINS_CPN10"/>
    <property type="match status" value="1"/>
</dbReference>
<proteinExistence type="inferred from homology"/>
<accession>A9IY12</accession>
<protein>
    <recommendedName>
        <fullName evidence="1">Co-chaperonin GroES</fullName>
    </recommendedName>
    <alternativeName>
        <fullName evidence="1">10 kDa chaperonin</fullName>
    </alternativeName>
    <alternativeName>
        <fullName evidence="1">Chaperonin-10</fullName>
        <shortName evidence="1">Cpn10</shortName>
    </alternativeName>
</protein>
<gene>
    <name evidence="1" type="primary">groES</name>
    <name evidence="1" type="synonym">groS</name>
    <name type="ordered locus">BT_2245</name>
</gene>
<sequence length="98" mass="10714">MANIQFRPLHDRVVVRRVESENKTAGGIIIPDTAKEKPQEGEVIAVGNGALDDNGKRVPLEVKTGDRILFGKWSGTEVKINGEDLLIMKESDIMGIMG</sequence>
<keyword id="KW-0143">Chaperone</keyword>
<keyword id="KW-0963">Cytoplasm</keyword>
<feature type="chain" id="PRO_1000082365" description="Co-chaperonin GroES">
    <location>
        <begin position="1"/>
        <end position="98"/>
    </location>
</feature>
<comment type="function">
    <text evidence="1">Together with the chaperonin GroEL, plays an essential role in assisting protein folding. The GroEL-GroES system forms a nano-cage that allows encapsulation of the non-native substrate proteins and provides a physical environment optimized to promote and accelerate protein folding. GroES binds to the apical surface of the GroEL ring, thereby capping the opening of the GroEL channel.</text>
</comment>
<comment type="subunit">
    <text evidence="1">Heptamer of 7 subunits arranged in a ring. Interacts with the chaperonin GroEL.</text>
</comment>
<comment type="subcellular location">
    <subcellularLocation>
        <location evidence="1">Cytoplasm</location>
    </subcellularLocation>
</comment>
<comment type="similarity">
    <text evidence="1">Belongs to the GroES chaperonin family.</text>
</comment>
<name>CH10_BART1</name>
<evidence type="ECO:0000255" key="1">
    <source>
        <dbReference type="HAMAP-Rule" id="MF_00580"/>
    </source>
</evidence>
<reference key="1">
    <citation type="journal article" date="2007" name="Nat. Genet.">
        <title>Genomic analysis of Bartonella identifies type IV secretion systems as host adaptability factors.</title>
        <authorList>
            <person name="Saenz H.L."/>
            <person name="Engel P."/>
            <person name="Stoeckli M.C."/>
            <person name="Lanz C."/>
            <person name="Raddatz G."/>
            <person name="Vayssier-Taussat M."/>
            <person name="Birtles R."/>
            <person name="Schuster S.C."/>
            <person name="Dehio C."/>
        </authorList>
    </citation>
    <scope>NUCLEOTIDE SEQUENCE [LARGE SCALE GENOMIC DNA]</scope>
    <source>
        <strain>CIP 105476 / IBS 506</strain>
    </source>
</reference>
<organism>
    <name type="scientific">Bartonella tribocorum (strain CIP 105476 / IBS 506)</name>
    <dbReference type="NCBI Taxonomy" id="382640"/>
    <lineage>
        <taxon>Bacteria</taxon>
        <taxon>Pseudomonadati</taxon>
        <taxon>Pseudomonadota</taxon>
        <taxon>Alphaproteobacteria</taxon>
        <taxon>Hyphomicrobiales</taxon>
        <taxon>Bartonellaceae</taxon>
        <taxon>Bartonella</taxon>
    </lineage>
</organism>